<name>GLSA_SHOC1</name>
<comment type="catalytic activity">
    <reaction evidence="1">
        <text>L-glutamine + H2O = L-glutamate + NH4(+)</text>
        <dbReference type="Rhea" id="RHEA:15889"/>
        <dbReference type="ChEBI" id="CHEBI:15377"/>
        <dbReference type="ChEBI" id="CHEBI:28938"/>
        <dbReference type="ChEBI" id="CHEBI:29985"/>
        <dbReference type="ChEBI" id="CHEBI:58359"/>
        <dbReference type="EC" id="3.5.1.2"/>
    </reaction>
</comment>
<comment type="subunit">
    <text evidence="1">Homotetramer.</text>
</comment>
<comment type="similarity">
    <text evidence="1">Belongs to the glutaminase family.</text>
</comment>
<gene>
    <name evidence="1" type="primary">glsA</name>
    <name type="ordered locus">ABC0329</name>
</gene>
<dbReference type="EC" id="3.5.1.2" evidence="1"/>
<dbReference type="EMBL" id="AP006627">
    <property type="protein sequence ID" value="BAD62871.1"/>
    <property type="molecule type" value="Genomic_DNA"/>
</dbReference>
<dbReference type="RefSeq" id="WP_011245190.1">
    <property type="nucleotide sequence ID" value="NC_006582.1"/>
</dbReference>
<dbReference type="SMR" id="Q5WL84"/>
<dbReference type="STRING" id="66692.ABC0329"/>
<dbReference type="KEGG" id="bcl:ABC0329"/>
<dbReference type="eggNOG" id="COG2066">
    <property type="taxonomic scope" value="Bacteria"/>
</dbReference>
<dbReference type="HOGENOM" id="CLU_027932_1_0_9"/>
<dbReference type="OrthoDB" id="9788822at2"/>
<dbReference type="Proteomes" id="UP000001168">
    <property type="component" value="Chromosome"/>
</dbReference>
<dbReference type="GO" id="GO:0004359">
    <property type="term" value="F:glutaminase activity"/>
    <property type="evidence" value="ECO:0007669"/>
    <property type="project" value="UniProtKB-UniRule"/>
</dbReference>
<dbReference type="GO" id="GO:0006537">
    <property type="term" value="P:glutamate biosynthetic process"/>
    <property type="evidence" value="ECO:0007669"/>
    <property type="project" value="TreeGrafter"/>
</dbReference>
<dbReference type="GO" id="GO:0006543">
    <property type="term" value="P:glutamine catabolic process"/>
    <property type="evidence" value="ECO:0007669"/>
    <property type="project" value="TreeGrafter"/>
</dbReference>
<dbReference type="FunFam" id="3.40.710.10:FF:000005">
    <property type="entry name" value="Glutaminase"/>
    <property type="match status" value="1"/>
</dbReference>
<dbReference type="Gene3D" id="1.10.1500.10">
    <property type="match status" value="1"/>
</dbReference>
<dbReference type="Gene3D" id="3.40.710.10">
    <property type="entry name" value="DD-peptidase/beta-lactamase superfamily"/>
    <property type="match status" value="1"/>
</dbReference>
<dbReference type="HAMAP" id="MF_00313">
    <property type="entry name" value="Glutaminase"/>
    <property type="match status" value="1"/>
</dbReference>
<dbReference type="InterPro" id="IPR012338">
    <property type="entry name" value="Beta-lactam/transpept-like"/>
</dbReference>
<dbReference type="InterPro" id="IPR015868">
    <property type="entry name" value="Glutaminase"/>
</dbReference>
<dbReference type="NCBIfam" id="TIGR03814">
    <property type="entry name" value="Gln_ase"/>
    <property type="match status" value="1"/>
</dbReference>
<dbReference type="PANTHER" id="PTHR12544">
    <property type="entry name" value="GLUTAMINASE"/>
    <property type="match status" value="1"/>
</dbReference>
<dbReference type="PANTHER" id="PTHR12544:SF29">
    <property type="entry name" value="GLUTAMINASE"/>
    <property type="match status" value="1"/>
</dbReference>
<dbReference type="Pfam" id="PF04960">
    <property type="entry name" value="Glutaminase"/>
    <property type="match status" value="1"/>
</dbReference>
<dbReference type="SUPFAM" id="SSF56601">
    <property type="entry name" value="beta-lactamase/transpeptidase-like"/>
    <property type="match status" value="1"/>
</dbReference>
<proteinExistence type="inferred from homology"/>
<sequence>MLCRSNDELELLISQARAFAGQGEVAQYIPALAAAHKHELSVALYYPDGKGFMAGDTEENFTLQSISKVLSLALALIDQGEECVFTRVGKEPTGDPFNSIAKLETNKPSKPLNPMINAGALAVTHMIKGNTAGERFERLLDFIRCLTGNETITYNKEIAKSEFETAHLNRALVYFMKEHGVIDEDVEELMDLYTKQCAIEMNCIDLARVGCVLAMDGCDPDTGKQLLPIDVARICKTFMVTCGMYNASGEFAINVGIPAKSGVSGGIMGAVPKKCGIGICGPSLDEKGNSIAGIKLLEMMAKRYSLSMF</sequence>
<protein>
    <recommendedName>
        <fullName evidence="1">Glutaminase</fullName>
        <ecNumber evidence="1">3.5.1.2</ecNumber>
    </recommendedName>
</protein>
<feature type="chain" id="PRO_1000048325" description="Glutaminase">
    <location>
        <begin position="1"/>
        <end position="309"/>
    </location>
</feature>
<feature type="binding site" evidence="1">
    <location>
        <position position="65"/>
    </location>
    <ligand>
        <name>substrate</name>
    </ligand>
</feature>
<feature type="binding site" evidence="1">
    <location>
        <position position="117"/>
    </location>
    <ligand>
        <name>substrate</name>
    </ligand>
</feature>
<feature type="binding site" evidence="1">
    <location>
        <position position="162"/>
    </location>
    <ligand>
        <name>substrate</name>
    </ligand>
</feature>
<feature type="binding site" evidence="1">
    <location>
        <position position="169"/>
    </location>
    <ligand>
        <name>substrate</name>
    </ligand>
</feature>
<feature type="binding site" evidence="1">
    <location>
        <position position="193"/>
    </location>
    <ligand>
        <name>substrate</name>
    </ligand>
</feature>
<feature type="binding site" evidence="1">
    <location>
        <position position="245"/>
    </location>
    <ligand>
        <name>substrate</name>
    </ligand>
</feature>
<feature type="binding site" evidence="1">
    <location>
        <position position="263"/>
    </location>
    <ligand>
        <name>substrate</name>
    </ligand>
</feature>
<accession>Q5WL84</accession>
<organism>
    <name type="scientific">Shouchella clausii (strain KSM-K16)</name>
    <name type="common">Alkalihalobacillus clausii</name>
    <dbReference type="NCBI Taxonomy" id="66692"/>
    <lineage>
        <taxon>Bacteria</taxon>
        <taxon>Bacillati</taxon>
        <taxon>Bacillota</taxon>
        <taxon>Bacilli</taxon>
        <taxon>Bacillales</taxon>
        <taxon>Bacillaceae</taxon>
        <taxon>Shouchella</taxon>
    </lineage>
</organism>
<evidence type="ECO:0000255" key="1">
    <source>
        <dbReference type="HAMAP-Rule" id="MF_00313"/>
    </source>
</evidence>
<reference key="1">
    <citation type="submission" date="2003-10" db="EMBL/GenBank/DDBJ databases">
        <title>The complete genome sequence of the alkaliphilic Bacillus clausii KSM-K16.</title>
        <authorList>
            <person name="Takaki Y."/>
            <person name="Kageyama Y."/>
            <person name="Shimamura S."/>
            <person name="Suzuki H."/>
            <person name="Nishi S."/>
            <person name="Hatada Y."/>
            <person name="Kawai S."/>
            <person name="Ito S."/>
            <person name="Horikoshi K."/>
        </authorList>
    </citation>
    <scope>NUCLEOTIDE SEQUENCE [LARGE SCALE GENOMIC DNA]</scope>
    <source>
        <strain>KSM-K16</strain>
    </source>
</reference>
<keyword id="KW-0378">Hydrolase</keyword>
<keyword id="KW-1185">Reference proteome</keyword>